<dbReference type="EC" id="2.3.1.31" evidence="1"/>
<dbReference type="EMBL" id="AP010656">
    <property type="protein sequence ID" value="BAG83406.1"/>
    <property type="molecule type" value="Genomic_DNA"/>
</dbReference>
<dbReference type="RefSeq" id="WP_012573167.1">
    <property type="nucleotide sequence ID" value="NC_011565.1"/>
</dbReference>
<dbReference type="SMR" id="B6YQD4"/>
<dbReference type="STRING" id="511995.CFPG_143"/>
<dbReference type="KEGG" id="aps:CFPG_143"/>
<dbReference type="eggNOG" id="COG1897">
    <property type="taxonomic scope" value="Bacteria"/>
</dbReference>
<dbReference type="HOGENOM" id="CLU_057851_0_1_10"/>
<dbReference type="OrthoDB" id="9772423at2"/>
<dbReference type="UniPathway" id="UPA00051">
    <property type="reaction ID" value="UER00074"/>
</dbReference>
<dbReference type="Proteomes" id="UP000000723">
    <property type="component" value="Chromosome"/>
</dbReference>
<dbReference type="GO" id="GO:0005737">
    <property type="term" value="C:cytoplasm"/>
    <property type="evidence" value="ECO:0007669"/>
    <property type="project" value="UniProtKB-SubCell"/>
</dbReference>
<dbReference type="GO" id="GO:0004414">
    <property type="term" value="F:homoserine O-acetyltransferase activity"/>
    <property type="evidence" value="ECO:0007669"/>
    <property type="project" value="UniProtKB-EC"/>
</dbReference>
<dbReference type="GO" id="GO:0008899">
    <property type="term" value="F:homoserine O-succinyltransferase activity"/>
    <property type="evidence" value="ECO:0007669"/>
    <property type="project" value="UniProtKB-UniRule"/>
</dbReference>
<dbReference type="GO" id="GO:0019281">
    <property type="term" value="P:L-methionine biosynthetic process from homoserine via O-succinyl-L-homoserine and cystathionine"/>
    <property type="evidence" value="ECO:0007669"/>
    <property type="project" value="InterPro"/>
</dbReference>
<dbReference type="CDD" id="cd03131">
    <property type="entry name" value="GATase1_HTS"/>
    <property type="match status" value="1"/>
</dbReference>
<dbReference type="FunFam" id="3.40.50.880:FF:000004">
    <property type="entry name" value="Homoserine O-succinyltransferase"/>
    <property type="match status" value="1"/>
</dbReference>
<dbReference type="Gene3D" id="3.40.50.880">
    <property type="match status" value="1"/>
</dbReference>
<dbReference type="HAMAP" id="MF_00295">
    <property type="entry name" value="MetA_acyltransf"/>
    <property type="match status" value="1"/>
</dbReference>
<dbReference type="InterPro" id="IPR029062">
    <property type="entry name" value="Class_I_gatase-like"/>
</dbReference>
<dbReference type="InterPro" id="IPR005697">
    <property type="entry name" value="HST_MetA"/>
</dbReference>
<dbReference type="InterPro" id="IPR033752">
    <property type="entry name" value="MetA_family"/>
</dbReference>
<dbReference type="NCBIfam" id="TIGR01001">
    <property type="entry name" value="metA"/>
    <property type="match status" value="1"/>
</dbReference>
<dbReference type="PANTHER" id="PTHR20919">
    <property type="entry name" value="HOMOSERINE O-SUCCINYLTRANSFERASE"/>
    <property type="match status" value="1"/>
</dbReference>
<dbReference type="PANTHER" id="PTHR20919:SF0">
    <property type="entry name" value="HOMOSERINE O-SUCCINYLTRANSFERASE"/>
    <property type="match status" value="1"/>
</dbReference>
<dbReference type="Pfam" id="PF04204">
    <property type="entry name" value="HTS"/>
    <property type="match status" value="1"/>
</dbReference>
<dbReference type="PIRSF" id="PIRSF000450">
    <property type="entry name" value="H_ser_succinyltr"/>
    <property type="match status" value="1"/>
</dbReference>
<dbReference type="SUPFAM" id="SSF52317">
    <property type="entry name" value="Class I glutamine amidotransferase-like"/>
    <property type="match status" value="1"/>
</dbReference>
<sequence length="314" mass="36660">MPLNLPRHLPAIEILKRESIFVMDDLRASAQDIRPLKIVLLNLMPVKIATETDFVRLLSDSPLQVNVVFVKMKEHQSKNTSLEHLMAFYKNFEDICEENYDGMIITGAPLELMNFEEVTYWEELQKIFDWASKHVTSTLYICWAAQAGLYHFYGIPKYSLAKKMFGVFQHTTNGSNVPLFRGFDSEFYVPHSRYTEIRKEDILKVPRLKLLVESKESGVHIVSARCGREIFMTGHAEYAPNTLHNEYQRDLDKGIQTEIPKNYYKDNDSTKDVLVSWVAHANLLFKNWLNYYVYQATPYDPKEIEFLEDLNVKE</sequence>
<comment type="function">
    <text evidence="1">Transfers an acetyl group from acetyl-CoA to L-homoserine, forming acetyl-L-homoserine.</text>
</comment>
<comment type="catalytic activity">
    <reaction evidence="1">
        <text>L-homoserine + acetyl-CoA = O-acetyl-L-homoserine + CoA</text>
        <dbReference type="Rhea" id="RHEA:13701"/>
        <dbReference type="ChEBI" id="CHEBI:57287"/>
        <dbReference type="ChEBI" id="CHEBI:57288"/>
        <dbReference type="ChEBI" id="CHEBI:57476"/>
        <dbReference type="ChEBI" id="CHEBI:57716"/>
        <dbReference type="EC" id="2.3.1.31"/>
    </reaction>
</comment>
<comment type="pathway">
    <text evidence="1">Amino-acid biosynthesis; L-methionine biosynthesis via de novo pathway; O-acetyl-L-homoserine from L-homoserine: step 1/1.</text>
</comment>
<comment type="subcellular location">
    <subcellularLocation>
        <location evidence="1">Cytoplasm</location>
    </subcellularLocation>
</comment>
<comment type="similarity">
    <text evidence="1">Belongs to the MetA family.</text>
</comment>
<feature type="chain" id="PRO_1000115173" description="Homoserine O-acetyltransferase">
    <location>
        <begin position="1"/>
        <end position="314"/>
    </location>
</feature>
<feature type="active site" description="Acyl-thioester intermediate" evidence="1">
    <location>
        <position position="142"/>
    </location>
</feature>
<feature type="active site" description="Proton acceptor" evidence="1">
    <location>
        <position position="235"/>
    </location>
</feature>
<feature type="active site" evidence="1">
    <location>
        <position position="237"/>
    </location>
</feature>
<feature type="binding site" evidence="1">
    <location>
        <position position="163"/>
    </location>
    <ligand>
        <name>substrate</name>
    </ligand>
</feature>
<feature type="binding site" evidence="1">
    <location>
        <position position="192"/>
    </location>
    <ligand>
        <name>substrate</name>
    </ligand>
</feature>
<feature type="binding site" evidence="1">
    <location>
        <position position="249"/>
    </location>
    <ligand>
        <name>substrate</name>
    </ligand>
</feature>
<feature type="site" description="Important for acyl-CoA specificity" evidence="1">
    <location>
        <position position="111"/>
    </location>
</feature>
<feature type="site" description="Important for substrate specificity" evidence="1">
    <location>
        <position position="192"/>
    </location>
</feature>
<organism>
    <name type="scientific">Azobacteroides pseudotrichonymphae genomovar. CFP2</name>
    <dbReference type="NCBI Taxonomy" id="511995"/>
    <lineage>
        <taxon>Bacteria</taxon>
        <taxon>Pseudomonadati</taxon>
        <taxon>Bacteroidota</taxon>
        <taxon>Bacteroidia</taxon>
        <taxon>Bacteroidales</taxon>
        <taxon>Candidatus Azobacteroides</taxon>
    </lineage>
</organism>
<protein>
    <recommendedName>
        <fullName evidence="1">Homoserine O-acetyltransferase</fullName>
        <shortName evidence="1">HAT</shortName>
        <ecNumber evidence="1">2.3.1.31</ecNumber>
    </recommendedName>
    <alternativeName>
        <fullName evidence="1">Homoserine transacetylase</fullName>
        <shortName evidence="1">HTA</shortName>
    </alternativeName>
</protein>
<reference key="1">
    <citation type="journal article" date="2008" name="Science">
        <title>Genome of an endosymbiont coupling N2 fixation to cellulolysis within RT protist cells in termite gut.</title>
        <authorList>
            <person name="Hongoh Y."/>
            <person name="Sharma V.K."/>
            <person name="Prakash T."/>
            <person name="Noda S."/>
            <person name="Toh H."/>
            <person name="Taylor T.D."/>
            <person name="Kudo T."/>
            <person name="Sakaki Y."/>
            <person name="Toyoda A."/>
            <person name="Hattori M."/>
            <person name="Ohkuma M."/>
        </authorList>
    </citation>
    <scope>NUCLEOTIDE SEQUENCE [LARGE SCALE GENOMIC DNA]</scope>
</reference>
<keyword id="KW-0012">Acyltransferase</keyword>
<keyword id="KW-0028">Amino-acid biosynthesis</keyword>
<keyword id="KW-0963">Cytoplasm</keyword>
<keyword id="KW-0486">Methionine biosynthesis</keyword>
<keyword id="KW-1185">Reference proteome</keyword>
<keyword id="KW-0808">Transferase</keyword>
<proteinExistence type="inferred from homology"/>
<name>METAA_AZOPC</name>
<evidence type="ECO:0000255" key="1">
    <source>
        <dbReference type="HAMAP-Rule" id="MF_00295"/>
    </source>
</evidence>
<accession>B6YQD4</accession>
<gene>
    <name evidence="1" type="primary">metAA</name>
    <name type="ordered locus">CFPG_143</name>
</gene>